<comment type="function">
    <text>The branched-chain alpha-keto dehydrogenase complex catalyzes the overall conversion of alpha-keto acids to acyl-CoA and CO(2). It contains multiple copies of three enzymatic components: branched-chain alpha-keto acid decarboxylase (E1), lipoamide acyltransferase (E2) and lipoamide dehydrogenase (E3).</text>
</comment>
<comment type="catalytic activity">
    <reaction>
        <text>N(6)-[(R)-dihydrolipoyl]-L-lysyl-[protein] + 2-methylpropanoyl-CoA = N(6)-[(R)-S(8)-2-methylpropanoyldihydrolipoyl]-L-lysyl-[protein] + CoA</text>
        <dbReference type="Rhea" id="RHEA:18865"/>
        <dbReference type="Rhea" id="RHEA-COMP:10475"/>
        <dbReference type="Rhea" id="RHEA-COMP:10497"/>
        <dbReference type="ChEBI" id="CHEBI:57287"/>
        <dbReference type="ChEBI" id="CHEBI:57338"/>
        <dbReference type="ChEBI" id="CHEBI:83100"/>
        <dbReference type="ChEBI" id="CHEBI:83142"/>
        <dbReference type="EC" id="2.3.1.168"/>
    </reaction>
</comment>
<comment type="cofactor">
    <cofactor evidence="1">
        <name>(R)-lipoate</name>
        <dbReference type="ChEBI" id="CHEBI:83088"/>
    </cofactor>
    <text evidence="1">Binds 1 lipoyl cofactor covalently.</text>
</comment>
<comment type="subunit">
    <text>Forms a 24-polypeptide structural core with octahedral symmetry.</text>
</comment>
<comment type="similarity">
    <text evidence="6">Belongs to the 2-oxoacid dehydrogenase family.</text>
</comment>
<protein>
    <recommendedName>
        <fullName>Lipoamide acyltransferase component of branched-chain alpha-keto acid dehydrogenase complex</fullName>
        <ecNumber>2.3.1.168</ecNumber>
    </recommendedName>
    <alternativeName>
        <fullName>Branched-chain alpha-keto acid dehydrogenase complex component E2</fullName>
        <shortName>BCKAD-E2</shortName>
        <shortName>BCKADE2</shortName>
    </alternativeName>
    <alternativeName>
        <fullName>Dihydrolipoamide acetyltransferase component of branched-chain alpha-keto acid dehydrogenase complex</fullName>
    </alternativeName>
    <alternativeName>
        <fullName>Dihydrolipoamide branched chain transacylase</fullName>
    </alternativeName>
    <alternativeName>
        <fullName>Dihydrolipoyllysine-residue (2-methylpropanoyl)transferase</fullName>
    </alternativeName>
</protein>
<gene>
    <name type="primary">bfmBB</name>
    <name type="synonym">bfmB</name>
    <name type="synonym">bfmB2</name>
    <name type="ordered locus">BSU24030</name>
</gene>
<organism>
    <name type="scientific">Bacillus subtilis (strain 168)</name>
    <dbReference type="NCBI Taxonomy" id="224308"/>
    <lineage>
        <taxon>Bacteria</taxon>
        <taxon>Bacillati</taxon>
        <taxon>Bacillota</taxon>
        <taxon>Bacilli</taxon>
        <taxon>Bacillales</taxon>
        <taxon>Bacillaceae</taxon>
        <taxon>Bacillus</taxon>
    </lineage>
</organism>
<evidence type="ECO:0000250" key="1"/>
<evidence type="ECO:0000255" key="2"/>
<evidence type="ECO:0000255" key="3">
    <source>
        <dbReference type="PROSITE-ProRule" id="PRU01066"/>
    </source>
</evidence>
<evidence type="ECO:0000255" key="4">
    <source>
        <dbReference type="PROSITE-ProRule" id="PRU01170"/>
    </source>
</evidence>
<evidence type="ECO:0000256" key="5">
    <source>
        <dbReference type="SAM" id="MobiDB-lite"/>
    </source>
</evidence>
<evidence type="ECO:0000305" key="6"/>
<reference key="1">
    <citation type="journal article" date="1993" name="Eur. J. Biochem.">
        <title>The primary structure of branched-chain alpha-oxo acid dehydrogenase from Bacillus subtilis and its similarity to other alpha-oxo acid dehydrogenases.</title>
        <authorList>
            <person name="Wang G.-F."/>
            <person name="Kuriki T."/>
            <person name="Roy K.L."/>
            <person name="Kaneda T."/>
        </authorList>
    </citation>
    <scope>NUCLEOTIDE SEQUENCE [GENOMIC DNA]</scope>
    <source>
        <strain>168</strain>
    </source>
</reference>
<reference key="2">
    <citation type="journal article" date="1996" name="Microbiology">
        <title>Systematic sequencing of the 283 kb 210 degrees-232 degrees region of the Bacillus subtilis genome containing the skin element and many sporulation genes.</title>
        <authorList>
            <person name="Mizuno M."/>
            <person name="Masuda S."/>
            <person name="Takemaru K."/>
            <person name="Hosono S."/>
            <person name="Sato T."/>
            <person name="Takeuchi M."/>
            <person name="Kobayashi Y."/>
        </authorList>
    </citation>
    <scope>NUCLEOTIDE SEQUENCE [GENOMIC DNA]</scope>
    <source>
        <strain>168 / JH642</strain>
    </source>
</reference>
<reference key="3">
    <citation type="journal article" date="1997" name="Nature">
        <title>The complete genome sequence of the Gram-positive bacterium Bacillus subtilis.</title>
        <authorList>
            <person name="Kunst F."/>
            <person name="Ogasawara N."/>
            <person name="Moszer I."/>
            <person name="Albertini A.M."/>
            <person name="Alloni G."/>
            <person name="Azevedo V."/>
            <person name="Bertero M.G."/>
            <person name="Bessieres P."/>
            <person name="Bolotin A."/>
            <person name="Borchert S."/>
            <person name="Borriss R."/>
            <person name="Boursier L."/>
            <person name="Brans A."/>
            <person name="Braun M."/>
            <person name="Brignell S.C."/>
            <person name="Bron S."/>
            <person name="Brouillet S."/>
            <person name="Bruschi C.V."/>
            <person name="Caldwell B."/>
            <person name="Capuano V."/>
            <person name="Carter N.M."/>
            <person name="Choi S.-K."/>
            <person name="Codani J.-J."/>
            <person name="Connerton I.F."/>
            <person name="Cummings N.J."/>
            <person name="Daniel R.A."/>
            <person name="Denizot F."/>
            <person name="Devine K.M."/>
            <person name="Duesterhoeft A."/>
            <person name="Ehrlich S.D."/>
            <person name="Emmerson P.T."/>
            <person name="Entian K.-D."/>
            <person name="Errington J."/>
            <person name="Fabret C."/>
            <person name="Ferrari E."/>
            <person name="Foulger D."/>
            <person name="Fritz C."/>
            <person name="Fujita M."/>
            <person name="Fujita Y."/>
            <person name="Fuma S."/>
            <person name="Galizzi A."/>
            <person name="Galleron N."/>
            <person name="Ghim S.-Y."/>
            <person name="Glaser P."/>
            <person name="Goffeau A."/>
            <person name="Golightly E.J."/>
            <person name="Grandi G."/>
            <person name="Guiseppi G."/>
            <person name="Guy B.J."/>
            <person name="Haga K."/>
            <person name="Haiech J."/>
            <person name="Harwood C.R."/>
            <person name="Henaut A."/>
            <person name="Hilbert H."/>
            <person name="Holsappel S."/>
            <person name="Hosono S."/>
            <person name="Hullo M.-F."/>
            <person name="Itaya M."/>
            <person name="Jones L.-M."/>
            <person name="Joris B."/>
            <person name="Karamata D."/>
            <person name="Kasahara Y."/>
            <person name="Klaerr-Blanchard M."/>
            <person name="Klein C."/>
            <person name="Kobayashi Y."/>
            <person name="Koetter P."/>
            <person name="Koningstein G."/>
            <person name="Krogh S."/>
            <person name="Kumano M."/>
            <person name="Kurita K."/>
            <person name="Lapidus A."/>
            <person name="Lardinois S."/>
            <person name="Lauber J."/>
            <person name="Lazarevic V."/>
            <person name="Lee S.-M."/>
            <person name="Levine A."/>
            <person name="Liu H."/>
            <person name="Masuda S."/>
            <person name="Mauel C."/>
            <person name="Medigue C."/>
            <person name="Medina N."/>
            <person name="Mellado R.P."/>
            <person name="Mizuno M."/>
            <person name="Moestl D."/>
            <person name="Nakai S."/>
            <person name="Noback M."/>
            <person name="Noone D."/>
            <person name="O'Reilly M."/>
            <person name="Ogawa K."/>
            <person name="Ogiwara A."/>
            <person name="Oudega B."/>
            <person name="Park S.-H."/>
            <person name="Parro V."/>
            <person name="Pohl T.M."/>
            <person name="Portetelle D."/>
            <person name="Porwollik S."/>
            <person name="Prescott A.M."/>
            <person name="Presecan E."/>
            <person name="Pujic P."/>
            <person name="Purnelle B."/>
            <person name="Rapoport G."/>
            <person name="Rey M."/>
            <person name="Reynolds S."/>
            <person name="Rieger M."/>
            <person name="Rivolta C."/>
            <person name="Rocha E."/>
            <person name="Roche B."/>
            <person name="Rose M."/>
            <person name="Sadaie Y."/>
            <person name="Sato T."/>
            <person name="Scanlan E."/>
            <person name="Schleich S."/>
            <person name="Schroeter R."/>
            <person name="Scoffone F."/>
            <person name="Sekiguchi J."/>
            <person name="Sekowska A."/>
            <person name="Seror S.J."/>
            <person name="Serror P."/>
            <person name="Shin B.-S."/>
            <person name="Soldo B."/>
            <person name="Sorokin A."/>
            <person name="Tacconi E."/>
            <person name="Takagi T."/>
            <person name="Takahashi H."/>
            <person name="Takemaru K."/>
            <person name="Takeuchi M."/>
            <person name="Tamakoshi A."/>
            <person name="Tanaka T."/>
            <person name="Terpstra P."/>
            <person name="Tognoni A."/>
            <person name="Tosato V."/>
            <person name="Uchiyama S."/>
            <person name="Vandenbol M."/>
            <person name="Vannier F."/>
            <person name="Vassarotti A."/>
            <person name="Viari A."/>
            <person name="Wambutt R."/>
            <person name="Wedler E."/>
            <person name="Wedler H."/>
            <person name="Weitzenegger T."/>
            <person name="Winters P."/>
            <person name="Wipat A."/>
            <person name="Yamamoto H."/>
            <person name="Yamane K."/>
            <person name="Yasumoto K."/>
            <person name="Yata K."/>
            <person name="Yoshida K."/>
            <person name="Yoshikawa H.-F."/>
            <person name="Zumstein E."/>
            <person name="Yoshikawa H."/>
            <person name="Danchin A."/>
        </authorList>
    </citation>
    <scope>NUCLEOTIDE SEQUENCE [LARGE SCALE GENOMIC DNA]</scope>
    <source>
        <strain>168</strain>
    </source>
</reference>
<reference key="4">
    <citation type="journal article" date="1994" name="J. Biol. Chem.">
        <title>A protein that activates expression of a multidrug efflux transporter upon binding the transporter substrates.</title>
        <authorList>
            <person name="Ahmed M."/>
            <person name="Borsch C.M."/>
            <person name="Taylor S.S."/>
            <person name="Vazquez-Laslop N."/>
            <person name="Neyfakh A.A."/>
        </authorList>
    </citation>
    <scope>NUCLEOTIDE SEQUENCE [GENOMIC DNA] OF 266-424</scope>
    <source>
        <strain>168 / Marburg / ATCC 6051 / DSM 10 / JCM 1465 / NBRC 13719 / NCIMB 3610 / NRRL NRS-744 / VKM B-501</strain>
    </source>
</reference>
<proteinExistence type="inferred from homology"/>
<dbReference type="EC" id="2.3.1.168"/>
<dbReference type="EMBL" id="M97391">
    <property type="protein sequence ID" value="AAA22280.1"/>
    <property type="molecule type" value="Genomic_DNA"/>
</dbReference>
<dbReference type="EMBL" id="D84432">
    <property type="protein sequence ID" value="BAA12600.1"/>
    <property type="molecule type" value="Genomic_DNA"/>
</dbReference>
<dbReference type="EMBL" id="AL009126">
    <property type="protein sequence ID" value="CAB14334.1"/>
    <property type="molecule type" value="Genomic_DNA"/>
</dbReference>
<dbReference type="EMBL" id="L25604">
    <property type="protein sequence ID" value="AAB81541.1"/>
    <property type="molecule type" value="Genomic_DNA"/>
</dbReference>
<dbReference type="PIR" id="S32488">
    <property type="entry name" value="S32488"/>
</dbReference>
<dbReference type="RefSeq" id="WP_003230323.1">
    <property type="nucleotide sequence ID" value="NZ_OZ025638.1"/>
</dbReference>
<dbReference type="SMR" id="P37942"/>
<dbReference type="FunCoup" id="P37942">
    <property type="interactions" value="312"/>
</dbReference>
<dbReference type="IntAct" id="P37942">
    <property type="interactions" value="1"/>
</dbReference>
<dbReference type="STRING" id="224308.BSU24030"/>
<dbReference type="jPOST" id="P37942"/>
<dbReference type="PaxDb" id="224308-BSU24030"/>
<dbReference type="EnsemblBacteria" id="CAB14334">
    <property type="protein sequence ID" value="CAB14334"/>
    <property type="gene ID" value="BSU_24030"/>
</dbReference>
<dbReference type="GeneID" id="938677"/>
<dbReference type="KEGG" id="bsu:BSU24030"/>
<dbReference type="PATRIC" id="fig|224308.179.peg.2617"/>
<dbReference type="eggNOG" id="COG0508">
    <property type="taxonomic scope" value="Bacteria"/>
</dbReference>
<dbReference type="InParanoid" id="P37942"/>
<dbReference type="OrthoDB" id="9805770at2"/>
<dbReference type="PhylomeDB" id="P37942"/>
<dbReference type="BioCyc" id="BSUB:BSU24030-MONOMER"/>
<dbReference type="BioCyc" id="MetaCyc:MONOMER-11686"/>
<dbReference type="Proteomes" id="UP000001570">
    <property type="component" value="Chromosome"/>
</dbReference>
<dbReference type="GO" id="GO:0005829">
    <property type="term" value="C:cytosol"/>
    <property type="evidence" value="ECO:0000318"/>
    <property type="project" value="GO_Central"/>
</dbReference>
<dbReference type="GO" id="GO:0043754">
    <property type="term" value="F:dihydrolipoyllysine-residue (2-methylpropanoyl)transferase activity"/>
    <property type="evidence" value="ECO:0007669"/>
    <property type="project" value="UniProtKB-EC"/>
</dbReference>
<dbReference type="GO" id="GO:0004149">
    <property type="term" value="F:dihydrolipoyllysine-residue succinyltransferase activity"/>
    <property type="evidence" value="ECO:0000318"/>
    <property type="project" value="GO_Central"/>
</dbReference>
<dbReference type="GO" id="GO:0006096">
    <property type="term" value="P:glycolytic process"/>
    <property type="evidence" value="ECO:0007669"/>
    <property type="project" value="UniProtKB-KW"/>
</dbReference>
<dbReference type="GO" id="GO:0006099">
    <property type="term" value="P:tricarboxylic acid cycle"/>
    <property type="evidence" value="ECO:0000318"/>
    <property type="project" value="GO_Central"/>
</dbReference>
<dbReference type="CDD" id="cd06849">
    <property type="entry name" value="lipoyl_domain"/>
    <property type="match status" value="1"/>
</dbReference>
<dbReference type="FunFam" id="3.30.559.10:FF:000007">
    <property type="entry name" value="Dihydrolipoamide acetyltransferase component of pyruvate dehydrogenase complex"/>
    <property type="match status" value="1"/>
</dbReference>
<dbReference type="FunFam" id="4.10.320.10:FF:000008">
    <property type="entry name" value="Dihydrolipoamide acetyltransferase component of pyruvate dehydrogenase complex"/>
    <property type="match status" value="1"/>
</dbReference>
<dbReference type="Gene3D" id="2.40.50.100">
    <property type="match status" value="1"/>
</dbReference>
<dbReference type="Gene3D" id="3.30.559.10">
    <property type="entry name" value="Chloramphenicol acetyltransferase-like domain"/>
    <property type="match status" value="1"/>
</dbReference>
<dbReference type="Gene3D" id="4.10.320.10">
    <property type="entry name" value="E3-binding domain"/>
    <property type="match status" value="1"/>
</dbReference>
<dbReference type="InterPro" id="IPR003016">
    <property type="entry name" value="2-oxoA_DH_lipoyl-BS"/>
</dbReference>
<dbReference type="InterPro" id="IPR001078">
    <property type="entry name" value="2-oxoacid_DH_actylTfrase"/>
</dbReference>
<dbReference type="InterPro" id="IPR050743">
    <property type="entry name" value="2-oxoacid_DH_E2_comp"/>
</dbReference>
<dbReference type="InterPro" id="IPR000089">
    <property type="entry name" value="Biotin_lipoyl"/>
</dbReference>
<dbReference type="InterPro" id="IPR023213">
    <property type="entry name" value="CAT-like_dom_sf"/>
</dbReference>
<dbReference type="InterPro" id="IPR036625">
    <property type="entry name" value="E3-bd_dom_sf"/>
</dbReference>
<dbReference type="InterPro" id="IPR004167">
    <property type="entry name" value="PSBD"/>
</dbReference>
<dbReference type="InterPro" id="IPR011053">
    <property type="entry name" value="Single_hybrid_motif"/>
</dbReference>
<dbReference type="PANTHER" id="PTHR43178">
    <property type="entry name" value="DIHYDROLIPOAMIDE ACETYLTRANSFERASE COMPONENT OF PYRUVATE DEHYDROGENASE COMPLEX"/>
    <property type="match status" value="1"/>
</dbReference>
<dbReference type="PANTHER" id="PTHR43178:SF5">
    <property type="entry name" value="LIPOAMIDE ACYLTRANSFERASE COMPONENT OF BRANCHED-CHAIN ALPHA-KETO ACID DEHYDROGENASE COMPLEX, MITOCHONDRIAL"/>
    <property type="match status" value="1"/>
</dbReference>
<dbReference type="Pfam" id="PF00198">
    <property type="entry name" value="2-oxoacid_dh"/>
    <property type="match status" value="1"/>
</dbReference>
<dbReference type="Pfam" id="PF00364">
    <property type="entry name" value="Biotin_lipoyl"/>
    <property type="match status" value="1"/>
</dbReference>
<dbReference type="Pfam" id="PF02817">
    <property type="entry name" value="E3_binding"/>
    <property type="match status" value="1"/>
</dbReference>
<dbReference type="SUPFAM" id="SSF52777">
    <property type="entry name" value="CoA-dependent acyltransferases"/>
    <property type="match status" value="1"/>
</dbReference>
<dbReference type="SUPFAM" id="SSF47005">
    <property type="entry name" value="Peripheral subunit-binding domain of 2-oxo acid dehydrogenase complex"/>
    <property type="match status" value="1"/>
</dbReference>
<dbReference type="SUPFAM" id="SSF51230">
    <property type="entry name" value="Single hybrid motif"/>
    <property type="match status" value="1"/>
</dbReference>
<dbReference type="PROSITE" id="PS50968">
    <property type="entry name" value="BIOTINYL_LIPOYL"/>
    <property type="match status" value="1"/>
</dbReference>
<dbReference type="PROSITE" id="PS00189">
    <property type="entry name" value="LIPOYL"/>
    <property type="match status" value="1"/>
</dbReference>
<dbReference type="PROSITE" id="PS51826">
    <property type="entry name" value="PSBD"/>
    <property type="match status" value="1"/>
</dbReference>
<feature type="chain" id="PRO_0000162302" description="Lipoamide acyltransferase component of branched-chain alpha-keto acid dehydrogenase complex">
    <location>
        <begin position="1"/>
        <end position="424"/>
    </location>
</feature>
<feature type="domain" description="Lipoyl-binding" evidence="3">
    <location>
        <begin position="3"/>
        <end position="78"/>
    </location>
</feature>
<feature type="domain" description="Peripheral subunit-binding (PSBD)" evidence="4">
    <location>
        <begin position="116"/>
        <end position="153"/>
    </location>
</feature>
<feature type="region of interest" description="Disordered" evidence="5">
    <location>
        <begin position="82"/>
        <end position="115"/>
    </location>
</feature>
<feature type="region of interest" description="Disordered" evidence="5">
    <location>
        <begin position="154"/>
        <end position="193"/>
    </location>
</feature>
<feature type="active site" evidence="2">
    <location>
        <position position="395"/>
    </location>
</feature>
<feature type="active site" evidence="2">
    <location>
        <position position="399"/>
    </location>
</feature>
<feature type="modified residue" description="N6-lipoyllysine" evidence="3">
    <location>
        <position position="44"/>
    </location>
</feature>
<feature type="sequence conflict" description="In Ref. 4; AAB81541." evidence="6" ref="4">
    <original>A</original>
    <variation>P</variation>
    <location>
        <position position="305"/>
    </location>
</feature>
<feature type="sequence conflict" description="In Ref. 4; AAB81541." evidence="6" ref="4">
    <original>V</original>
    <variation>I</variation>
    <location>
        <position position="350"/>
    </location>
</feature>
<feature type="sequence conflict" description="In Ref. 4; AAB81541." evidence="6" ref="4">
    <original>Q</original>
    <variation>E</variation>
    <location>
        <position position="365"/>
    </location>
</feature>
<feature type="sequence conflict" description="In Ref. 4; AAB81541." evidence="6" ref="4">
    <original>V</original>
    <variation>D</variation>
    <location>
        <position position="370"/>
    </location>
</feature>
<keyword id="KW-0012">Acyltransferase</keyword>
<keyword id="KW-0324">Glycolysis</keyword>
<keyword id="KW-0450">Lipoyl</keyword>
<keyword id="KW-1185">Reference proteome</keyword>
<keyword id="KW-0808">Transferase</keyword>
<accession>P37942</accession>
<sequence length="424" mass="45837">MAIEQMTMPQLGESVTEGTISKWLVAPGDKVNKYDPIAEVMTDKVNAEVPSSFTGTITELVGEEGQTLQVGEMICKIETEGANPAEQKQEQPAASEAAENPVAKSAGAADQPNKKRYSPAVLRLAGEHGIDLDQVTGTGAGGRITRKDIQRLIETGGVQEQNPEELKTAAPAPKSASKPEPKEETSYPASAAGDKEIPVTGVRKAIASNMKRSKTEIPHAWTMMEVDVTNMVAYRNSIKDSFKKTEGFNLTFFAFFVKAVAQALKEFPQMNSMWAGDKIIQKKDINISIAVATEDSLFVPVIKNADEKTIKGIAKDITGLAKKVRDGKLTADDMQGGTFTVNNTGSFGSVQSMGIINYPQAAILQVESIVKRPVVMDNGMIAVRDMVNLCLSLDHRVLDGLVCGRFLGRVKQILESIDEKTSVY</sequence>
<name>ODB2_BACSU</name>